<name>GLNB_AQUAE</name>
<keyword id="KW-0002">3D-structure</keyword>
<keyword id="KW-0547">Nucleotide-binding</keyword>
<keyword id="KW-0597">Phosphoprotein</keyword>
<keyword id="KW-1185">Reference proteome</keyword>
<keyword id="KW-0804">Transcription</keyword>
<keyword id="KW-0805">Transcription regulation</keyword>
<proteinExistence type="evidence at protein level"/>
<gene>
    <name type="primary">glnB</name>
    <name type="ordered locus">aq_109</name>
</gene>
<evidence type="ECO:0000250" key="1"/>
<evidence type="ECO:0000255" key="2">
    <source>
        <dbReference type="PROSITE-ProRule" id="PRU00675"/>
    </source>
</evidence>
<evidence type="ECO:0007829" key="3">
    <source>
        <dbReference type="PDB" id="2EG2"/>
    </source>
</evidence>
<evidence type="ECO:0007829" key="4">
    <source>
        <dbReference type="PDB" id="2Z0G"/>
    </source>
</evidence>
<feature type="chain" id="PRO_0000139768" description="Nitrogen regulatory protein P-II">
    <location>
        <begin position="1"/>
        <end position="112"/>
    </location>
</feature>
<feature type="modified residue" description="O-UMP-tyrosine" evidence="2">
    <location>
        <position position="51"/>
    </location>
</feature>
<feature type="strand" evidence="3">
    <location>
        <begin position="2"/>
        <end position="8"/>
    </location>
</feature>
<feature type="helix" evidence="3">
    <location>
        <begin position="10"/>
        <end position="12"/>
    </location>
</feature>
<feature type="helix" evidence="3">
    <location>
        <begin position="13"/>
        <end position="22"/>
    </location>
</feature>
<feature type="strand" evidence="3">
    <location>
        <begin position="29"/>
        <end position="35"/>
    </location>
</feature>
<feature type="strand" evidence="3">
    <location>
        <begin position="56"/>
        <end position="65"/>
    </location>
</feature>
<feature type="helix" evidence="3">
    <location>
        <begin position="67"/>
        <end position="69"/>
    </location>
</feature>
<feature type="helix" evidence="3">
    <location>
        <begin position="70"/>
        <end position="81"/>
    </location>
</feature>
<feature type="strand" evidence="3">
    <location>
        <begin position="90"/>
        <end position="95"/>
    </location>
</feature>
<feature type="strand" evidence="4">
    <location>
        <begin position="97"/>
        <end position="101"/>
    </location>
</feature>
<feature type="turn" evidence="3">
    <location>
        <begin position="102"/>
        <end position="104"/>
    </location>
</feature>
<feature type="helix" evidence="3">
    <location>
        <begin position="108"/>
        <end position="110"/>
    </location>
</feature>
<organism>
    <name type="scientific">Aquifex aeolicus (strain VF5)</name>
    <dbReference type="NCBI Taxonomy" id="224324"/>
    <lineage>
        <taxon>Bacteria</taxon>
        <taxon>Pseudomonadati</taxon>
        <taxon>Aquificota</taxon>
        <taxon>Aquificia</taxon>
        <taxon>Aquificales</taxon>
        <taxon>Aquificaceae</taxon>
        <taxon>Aquifex</taxon>
    </lineage>
</organism>
<protein>
    <recommendedName>
        <fullName>Nitrogen regulatory protein P-II</fullName>
    </recommendedName>
</protein>
<reference key="1">
    <citation type="journal article" date="1998" name="Nature">
        <title>The complete genome of the hyperthermophilic bacterium Aquifex aeolicus.</title>
        <authorList>
            <person name="Deckert G."/>
            <person name="Warren P.V."/>
            <person name="Gaasterland T."/>
            <person name="Young W.G."/>
            <person name="Lenox A.L."/>
            <person name="Graham D.E."/>
            <person name="Overbeek R."/>
            <person name="Snead M.A."/>
            <person name="Keller M."/>
            <person name="Aujay M."/>
            <person name="Huber R."/>
            <person name="Feldman R.A."/>
            <person name="Short J.M."/>
            <person name="Olsen G.J."/>
            <person name="Swanson R.V."/>
        </authorList>
    </citation>
    <scope>NUCLEOTIDE SEQUENCE [LARGE SCALE GENOMIC DNA]</scope>
    <source>
        <strain>VF5</strain>
    </source>
</reference>
<dbReference type="EMBL" id="AE000657">
    <property type="protein sequence ID" value="AAC06473.1"/>
    <property type="molecule type" value="Genomic_DNA"/>
</dbReference>
<dbReference type="PIR" id="F70310">
    <property type="entry name" value="F70310"/>
</dbReference>
<dbReference type="RefSeq" id="NP_213073.1">
    <property type="nucleotide sequence ID" value="NC_000918.1"/>
</dbReference>
<dbReference type="RefSeq" id="WP_010880011.1">
    <property type="nucleotide sequence ID" value="NC_000918.1"/>
</dbReference>
<dbReference type="PDB" id="2EG1">
    <property type="method" value="X-ray"/>
    <property type="resolution" value="1.80 A"/>
    <property type="chains" value="A=1-112"/>
</dbReference>
<dbReference type="PDB" id="2EG2">
    <property type="method" value="X-ray"/>
    <property type="resolution" value="1.72 A"/>
    <property type="chains" value="A=1-112"/>
</dbReference>
<dbReference type="PDB" id="2Z0G">
    <property type="method" value="X-ray"/>
    <property type="resolution" value="2.10 A"/>
    <property type="chains" value="A/B/C/D=1-112"/>
</dbReference>
<dbReference type="PDBsum" id="2EG1"/>
<dbReference type="PDBsum" id="2EG2"/>
<dbReference type="PDBsum" id="2Z0G"/>
<dbReference type="SMR" id="O66513"/>
<dbReference type="FunCoup" id="O66513">
    <property type="interactions" value="400"/>
</dbReference>
<dbReference type="STRING" id="224324.aq_109"/>
<dbReference type="EnsemblBacteria" id="AAC06473">
    <property type="protein sequence ID" value="AAC06473"/>
    <property type="gene ID" value="aq_109"/>
</dbReference>
<dbReference type="KEGG" id="aae:aq_109"/>
<dbReference type="PATRIC" id="fig|224324.8.peg.94"/>
<dbReference type="eggNOG" id="COG0347">
    <property type="taxonomic scope" value="Bacteria"/>
</dbReference>
<dbReference type="HOGENOM" id="CLU_082268_0_0_0"/>
<dbReference type="InParanoid" id="O66513"/>
<dbReference type="OrthoDB" id="9814202at2"/>
<dbReference type="EvolutionaryTrace" id="O66513"/>
<dbReference type="Proteomes" id="UP000000798">
    <property type="component" value="Chromosome"/>
</dbReference>
<dbReference type="GO" id="GO:0005829">
    <property type="term" value="C:cytosol"/>
    <property type="evidence" value="ECO:0000318"/>
    <property type="project" value="GO_Central"/>
</dbReference>
<dbReference type="GO" id="GO:0005524">
    <property type="term" value="F:ATP binding"/>
    <property type="evidence" value="ECO:0000318"/>
    <property type="project" value="GO_Central"/>
</dbReference>
<dbReference type="GO" id="GO:0030234">
    <property type="term" value="F:enzyme regulator activity"/>
    <property type="evidence" value="ECO:0000318"/>
    <property type="project" value="GO_Central"/>
</dbReference>
<dbReference type="GO" id="GO:0006808">
    <property type="term" value="P:regulation of nitrogen utilization"/>
    <property type="evidence" value="ECO:0000318"/>
    <property type="project" value="GO_Central"/>
</dbReference>
<dbReference type="FunFam" id="3.30.70.120:FF:000001">
    <property type="entry name" value="Nitrogen regulatory protein P-II"/>
    <property type="match status" value="1"/>
</dbReference>
<dbReference type="Gene3D" id="3.30.70.120">
    <property type="match status" value="1"/>
</dbReference>
<dbReference type="InterPro" id="IPR002187">
    <property type="entry name" value="N-reg_PII"/>
</dbReference>
<dbReference type="InterPro" id="IPR011322">
    <property type="entry name" value="N-reg_PII-like_a/b"/>
</dbReference>
<dbReference type="InterPro" id="IPR015867">
    <property type="entry name" value="N-reg_PII/ATP_PRibTrfase_C"/>
</dbReference>
<dbReference type="InterPro" id="IPR017918">
    <property type="entry name" value="N-reg_PII_CS"/>
</dbReference>
<dbReference type="PANTHER" id="PTHR30115">
    <property type="entry name" value="NITROGEN REGULATORY PROTEIN P-II"/>
    <property type="match status" value="1"/>
</dbReference>
<dbReference type="PANTHER" id="PTHR30115:SF11">
    <property type="entry name" value="NITROGEN REGULATORY PROTEIN P-II HOMOLOG"/>
    <property type="match status" value="1"/>
</dbReference>
<dbReference type="Pfam" id="PF00543">
    <property type="entry name" value="P-II"/>
    <property type="match status" value="1"/>
</dbReference>
<dbReference type="PIRSF" id="PIRSF039144">
    <property type="entry name" value="GlnB"/>
    <property type="match status" value="1"/>
</dbReference>
<dbReference type="PRINTS" id="PR00340">
    <property type="entry name" value="PIIGLNB"/>
</dbReference>
<dbReference type="SMART" id="SM00938">
    <property type="entry name" value="P-II"/>
    <property type="match status" value="1"/>
</dbReference>
<dbReference type="SUPFAM" id="SSF54913">
    <property type="entry name" value="GlnB-like"/>
    <property type="match status" value="1"/>
</dbReference>
<dbReference type="PROSITE" id="PS00638">
    <property type="entry name" value="PII_GLNB_CTER"/>
    <property type="match status" value="1"/>
</dbReference>
<dbReference type="PROSITE" id="PS51343">
    <property type="entry name" value="PII_GLNB_DOM"/>
    <property type="match status" value="1"/>
</dbReference>
<accession>O66513</accession>
<sequence length="112" mass="12497">MKKIEAIIKPFKLDEVKDALVEIGIGGMTVTEVKGFGQQKGHTEIYRGTEYVIDFLPKVKIEVVVRDEDVEKVVETIVKTAQTGRVGDGKIFIIPVEDVIRIRTGERGEQAI</sequence>
<comment type="function">
    <text evidence="1">In nitrogen-limiting conditions, when the ratio of Gln to 2-ketoglutarate decreases, P-II is uridylylated to P-II-UMP. P-II-UMP allows the deadenylation of glutamine synthetase (GS), thus activating the enzyme. Conversely, in nitrogen excess P-II is deuridylated and promotes the adenylation of GS. P-II indirectly controls the transcription of the GS gene (glnA). P-II prevents NR-II-catalyzed conversion of NR-I to NR-I-phosphate, the transcriptional activator of glnA. When P-II is uridylylated to P-II-UMP, these events are reversed (By similarity).</text>
</comment>
<comment type="subunit">
    <text evidence="1">Homotrimer.</text>
</comment>
<comment type="similarity">
    <text evidence="2">Belongs to the P(II) protein family.</text>
</comment>